<proteinExistence type="evidence at transcript level"/>
<evidence type="ECO:0000250" key="1"/>
<evidence type="ECO:0000255" key="2"/>
<evidence type="ECO:0000255" key="3">
    <source>
        <dbReference type="PROSITE-ProRule" id="PRU00794"/>
    </source>
</evidence>
<evidence type="ECO:0000269" key="4">
    <source>
    </source>
</evidence>
<evidence type="ECO:0000305" key="5"/>
<accession>Q9ZU95</accession>
<accession>Q8L979</accession>
<keyword id="KW-0378">Hydrolase</keyword>
<keyword id="KW-0460">Magnesium</keyword>
<keyword id="KW-0464">Manganese</keyword>
<keyword id="KW-0479">Metal-binding</keyword>
<keyword id="KW-0496">Mitochondrion</keyword>
<keyword id="KW-1185">Reference proteome</keyword>
<keyword id="KW-0809">Transit peptide</keyword>
<sequence length="182" mass="21052">MGVEKMVCLASRTGRQFQRYNKGRRQVVGCVPYRFKLSNDGKISDEVEVLVISSQKGHALMFPKGGWELDESVEEAASRECLEEAGVLGNVEHQLGKWDFLSKSRGTYYEGLMFPMLVTEQLELWPEQHVRQRIWMNVTEAREACRDWWMKEALDVLVERLSSPMNQPKEEKTMSISIETMC</sequence>
<feature type="transit peptide" description="Mitochondrion" evidence="2">
    <location>
        <begin position="1"/>
        <end position="26"/>
    </location>
</feature>
<feature type="chain" id="PRO_0000019960" description="Nudix hydrolase 17, mitochondrial">
    <location>
        <begin position="27"/>
        <end position="182"/>
    </location>
</feature>
<feature type="domain" description="Nudix hydrolase" evidence="3">
    <location>
        <begin position="27"/>
        <end position="158"/>
    </location>
</feature>
<feature type="short sequence motif" description="Nudix box">
    <location>
        <begin position="65"/>
        <end position="86"/>
    </location>
</feature>
<feature type="binding site" evidence="1">
    <location>
        <position position="80"/>
    </location>
    <ligand>
        <name>Mg(2+)</name>
        <dbReference type="ChEBI" id="CHEBI:18420"/>
    </ligand>
</feature>
<feature type="binding site" evidence="1">
    <location>
        <position position="84"/>
    </location>
    <ligand>
        <name>Mg(2+)</name>
        <dbReference type="ChEBI" id="CHEBI:18420"/>
    </ligand>
</feature>
<feature type="sequence conflict" description="In Ref. 4." evidence="5" ref="4">
    <original>M</original>
    <variation>I</variation>
    <location>
        <position position="1"/>
    </location>
</feature>
<name>NUD17_ARATH</name>
<gene>
    <name type="primary">NUDT17</name>
    <name type="synonym">NUDX17</name>
    <name type="ordered locus">At2g01670</name>
    <name type="ORF">T8O11.16</name>
</gene>
<organism>
    <name type="scientific">Arabidopsis thaliana</name>
    <name type="common">Mouse-ear cress</name>
    <dbReference type="NCBI Taxonomy" id="3702"/>
    <lineage>
        <taxon>Eukaryota</taxon>
        <taxon>Viridiplantae</taxon>
        <taxon>Streptophyta</taxon>
        <taxon>Embryophyta</taxon>
        <taxon>Tracheophyta</taxon>
        <taxon>Spermatophyta</taxon>
        <taxon>Magnoliopsida</taxon>
        <taxon>eudicotyledons</taxon>
        <taxon>Gunneridae</taxon>
        <taxon>Pentapetalae</taxon>
        <taxon>rosids</taxon>
        <taxon>malvids</taxon>
        <taxon>Brassicales</taxon>
        <taxon>Brassicaceae</taxon>
        <taxon>Camelineae</taxon>
        <taxon>Arabidopsis</taxon>
    </lineage>
</organism>
<dbReference type="EC" id="3.6.1.-"/>
<dbReference type="EMBL" id="AC006069">
    <property type="protein sequence ID" value="AAD12704.1"/>
    <property type="molecule type" value="Genomic_DNA"/>
</dbReference>
<dbReference type="EMBL" id="CP002685">
    <property type="protein sequence ID" value="AEC05483.1"/>
    <property type="molecule type" value="Genomic_DNA"/>
</dbReference>
<dbReference type="EMBL" id="AF325062">
    <property type="protein sequence ID" value="AAK17130.1"/>
    <property type="molecule type" value="mRNA"/>
</dbReference>
<dbReference type="EMBL" id="AF360131">
    <property type="protein sequence ID" value="AAK25841.1"/>
    <property type="molecule type" value="mRNA"/>
</dbReference>
<dbReference type="EMBL" id="AF412103">
    <property type="protein sequence ID" value="AAL06556.1"/>
    <property type="molecule type" value="mRNA"/>
</dbReference>
<dbReference type="EMBL" id="AY051030">
    <property type="protein sequence ID" value="AAK93707.1"/>
    <property type="molecule type" value="mRNA"/>
</dbReference>
<dbReference type="EMBL" id="AY088595">
    <property type="protein sequence ID" value="AAM66124.1"/>
    <property type="status" value="ALT_INIT"/>
    <property type="molecule type" value="mRNA"/>
</dbReference>
<dbReference type="PIR" id="F84427">
    <property type="entry name" value="F84427"/>
</dbReference>
<dbReference type="RefSeq" id="NP_565273.1">
    <property type="nucleotide sequence ID" value="NM_126228.5"/>
</dbReference>
<dbReference type="SMR" id="Q9ZU95"/>
<dbReference type="FunCoup" id="Q9ZU95">
    <property type="interactions" value="1641"/>
</dbReference>
<dbReference type="STRING" id="3702.Q9ZU95"/>
<dbReference type="PaxDb" id="3702-AT2G01670.1"/>
<dbReference type="ProteomicsDB" id="226030"/>
<dbReference type="EnsemblPlants" id="AT2G01670.1">
    <property type="protein sequence ID" value="AT2G01670.1"/>
    <property type="gene ID" value="AT2G01670"/>
</dbReference>
<dbReference type="GeneID" id="814696"/>
<dbReference type="Gramene" id="AT2G01670.1">
    <property type="protein sequence ID" value="AT2G01670.1"/>
    <property type="gene ID" value="AT2G01670"/>
</dbReference>
<dbReference type="KEGG" id="ath:AT2G01670"/>
<dbReference type="Araport" id="AT2G01670"/>
<dbReference type="TAIR" id="AT2G01670">
    <property type="gene designation" value="NUDT17"/>
</dbReference>
<dbReference type="eggNOG" id="KOG2839">
    <property type="taxonomic scope" value="Eukaryota"/>
</dbReference>
<dbReference type="HOGENOM" id="CLU_037162_5_2_1"/>
<dbReference type="InParanoid" id="Q9ZU95"/>
<dbReference type="OMA" id="ESDESCQ"/>
<dbReference type="PhylomeDB" id="Q9ZU95"/>
<dbReference type="BioCyc" id="ARA:AT2G01670-MONOMER"/>
<dbReference type="PRO" id="PR:Q9ZU95"/>
<dbReference type="Proteomes" id="UP000006548">
    <property type="component" value="Chromosome 2"/>
</dbReference>
<dbReference type="ExpressionAtlas" id="Q9ZU95">
    <property type="expression patterns" value="baseline and differential"/>
</dbReference>
<dbReference type="GO" id="GO:0005739">
    <property type="term" value="C:mitochondrion"/>
    <property type="evidence" value="ECO:0007669"/>
    <property type="project" value="UniProtKB-SubCell"/>
</dbReference>
<dbReference type="GO" id="GO:0046872">
    <property type="term" value="F:metal ion binding"/>
    <property type="evidence" value="ECO:0007669"/>
    <property type="project" value="UniProtKB-KW"/>
</dbReference>
<dbReference type="GO" id="GO:0016462">
    <property type="term" value="F:pyrophosphatase activity"/>
    <property type="evidence" value="ECO:0007669"/>
    <property type="project" value="InterPro"/>
</dbReference>
<dbReference type="CDD" id="cd04666">
    <property type="entry name" value="NUDIX_DIPP2_like_Nudt4"/>
    <property type="match status" value="1"/>
</dbReference>
<dbReference type="FunFam" id="3.90.79.10:FF:000022">
    <property type="entry name" value="Nudix hydrolase 17, mitochondrial"/>
    <property type="match status" value="1"/>
</dbReference>
<dbReference type="Gene3D" id="3.90.79.10">
    <property type="entry name" value="Nucleoside Triphosphate Pyrophosphohydrolase"/>
    <property type="match status" value="1"/>
</dbReference>
<dbReference type="InterPro" id="IPR047198">
    <property type="entry name" value="DDP-like_NUDIX"/>
</dbReference>
<dbReference type="InterPro" id="IPR015797">
    <property type="entry name" value="NUDIX_hydrolase-like_dom_sf"/>
</dbReference>
<dbReference type="InterPro" id="IPR000086">
    <property type="entry name" value="NUDIX_hydrolase_dom"/>
</dbReference>
<dbReference type="PANTHER" id="PTHR12629">
    <property type="entry name" value="DIPHOSPHOINOSITOL POLYPHOSPHATE PHOSPHOHYDROLASE"/>
    <property type="match status" value="1"/>
</dbReference>
<dbReference type="PANTHER" id="PTHR12629:SF62">
    <property type="entry name" value="NUDIX HYDROLASE 17, MITOCHONDRIAL"/>
    <property type="match status" value="1"/>
</dbReference>
<dbReference type="Pfam" id="PF00293">
    <property type="entry name" value="NUDIX"/>
    <property type="match status" value="1"/>
</dbReference>
<dbReference type="SUPFAM" id="SSF55811">
    <property type="entry name" value="Nudix"/>
    <property type="match status" value="1"/>
</dbReference>
<dbReference type="PROSITE" id="PS51462">
    <property type="entry name" value="NUDIX"/>
    <property type="match status" value="1"/>
</dbReference>
<reference key="1">
    <citation type="journal article" date="1999" name="Nature">
        <title>Sequence and analysis of chromosome 2 of the plant Arabidopsis thaliana.</title>
        <authorList>
            <person name="Lin X."/>
            <person name="Kaul S."/>
            <person name="Rounsley S.D."/>
            <person name="Shea T.P."/>
            <person name="Benito M.-I."/>
            <person name="Town C.D."/>
            <person name="Fujii C.Y."/>
            <person name="Mason T.M."/>
            <person name="Bowman C.L."/>
            <person name="Barnstead M.E."/>
            <person name="Feldblyum T.V."/>
            <person name="Buell C.R."/>
            <person name="Ketchum K.A."/>
            <person name="Lee J.J."/>
            <person name="Ronning C.M."/>
            <person name="Koo H.L."/>
            <person name="Moffat K.S."/>
            <person name="Cronin L.A."/>
            <person name="Shen M."/>
            <person name="Pai G."/>
            <person name="Van Aken S."/>
            <person name="Umayam L."/>
            <person name="Tallon L.J."/>
            <person name="Gill J.E."/>
            <person name="Adams M.D."/>
            <person name="Carrera A.J."/>
            <person name="Creasy T.H."/>
            <person name="Goodman H.M."/>
            <person name="Somerville C.R."/>
            <person name="Copenhaver G.P."/>
            <person name="Preuss D."/>
            <person name="Nierman W.C."/>
            <person name="White O."/>
            <person name="Eisen J.A."/>
            <person name="Salzberg S.L."/>
            <person name="Fraser C.M."/>
            <person name="Venter J.C."/>
        </authorList>
    </citation>
    <scope>NUCLEOTIDE SEQUENCE [LARGE SCALE GENOMIC DNA]</scope>
    <source>
        <strain>cv. Columbia</strain>
    </source>
</reference>
<reference key="2">
    <citation type="journal article" date="2017" name="Plant J.">
        <title>Araport11: a complete reannotation of the Arabidopsis thaliana reference genome.</title>
        <authorList>
            <person name="Cheng C.Y."/>
            <person name="Krishnakumar V."/>
            <person name="Chan A.P."/>
            <person name="Thibaud-Nissen F."/>
            <person name="Schobel S."/>
            <person name="Town C.D."/>
        </authorList>
    </citation>
    <scope>GENOME REANNOTATION</scope>
    <source>
        <strain>cv. Columbia</strain>
    </source>
</reference>
<reference key="3">
    <citation type="journal article" date="2003" name="Science">
        <title>Empirical analysis of transcriptional activity in the Arabidopsis genome.</title>
        <authorList>
            <person name="Yamada K."/>
            <person name="Lim J."/>
            <person name="Dale J.M."/>
            <person name="Chen H."/>
            <person name="Shinn P."/>
            <person name="Palm C.J."/>
            <person name="Southwick A.M."/>
            <person name="Wu H.C."/>
            <person name="Kim C.J."/>
            <person name="Nguyen M."/>
            <person name="Pham P.K."/>
            <person name="Cheuk R.F."/>
            <person name="Karlin-Newmann G."/>
            <person name="Liu S.X."/>
            <person name="Lam B."/>
            <person name="Sakano H."/>
            <person name="Wu T."/>
            <person name="Yu G."/>
            <person name="Miranda M."/>
            <person name="Quach H.L."/>
            <person name="Tripp M."/>
            <person name="Chang C.H."/>
            <person name="Lee J.M."/>
            <person name="Toriumi M.J."/>
            <person name="Chan M.M."/>
            <person name="Tang C.C."/>
            <person name="Onodera C.S."/>
            <person name="Deng J.M."/>
            <person name="Akiyama K."/>
            <person name="Ansari Y."/>
            <person name="Arakawa T."/>
            <person name="Banh J."/>
            <person name="Banno F."/>
            <person name="Bowser L."/>
            <person name="Brooks S.Y."/>
            <person name="Carninci P."/>
            <person name="Chao Q."/>
            <person name="Choy N."/>
            <person name="Enju A."/>
            <person name="Goldsmith A.D."/>
            <person name="Gurjal M."/>
            <person name="Hansen N.F."/>
            <person name="Hayashizaki Y."/>
            <person name="Johnson-Hopson C."/>
            <person name="Hsuan V.W."/>
            <person name="Iida K."/>
            <person name="Karnes M."/>
            <person name="Khan S."/>
            <person name="Koesema E."/>
            <person name="Ishida J."/>
            <person name="Jiang P.X."/>
            <person name="Jones T."/>
            <person name="Kawai J."/>
            <person name="Kamiya A."/>
            <person name="Meyers C."/>
            <person name="Nakajima M."/>
            <person name="Narusaka M."/>
            <person name="Seki M."/>
            <person name="Sakurai T."/>
            <person name="Satou M."/>
            <person name="Tamse R."/>
            <person name="Vaysberg M."/>
            <person name="Wallender E.K."/>
            <person name="Wong C."/>
            <person name="Yamamura Y."/>
            <person name="Yuan S."/>
            <person name="Shinozaki K."/>
            <person name="Davis R.W."/>
            <person name="Theologis A."/>
            <person name="Ecker J.R."/>
        </authorList>
    </citation>
    <scope>NUCLEOTIDE SEQUENCE [LARGE SCALE MRNA]</scope>
    <source>
        <strain>cv. Columbia</strain>
    </source>
</reference>
<reference key="4">
    <citation type="submission" date="2002-03" db="EMBL/GenBank/DDBJ databases">
        <title>Full-length cDNA from Arabidopsis thaliana.</title>
        <authorList>
            <person name="Brover V.V."/>
            <person name="Troukhan M.E."/>
            <person name="Alexandrov N.A."/>
            <person name="Lu Y.-P."/>
            <person name="Flavell R.B."/>
            <person name="Feldmann K.A."/>
        </authorList>
    </citation>
    <scope>NUCLEOTIDE SEQUENCE [LARGE SCALE MRNA]</scope>
</reference>
<reference key="5">
    <citation type="journal article" date="2005" name="J. Biol. Chem.">
        <title>Comprehensive analysis of cytosolic nudix hydrolases in Arabidopsis thaliana.</title>
        <authorList>
            <person name="Ogawa T."/>
            <person name="Ueda Y."/>
            <person name="Yoshimura K."/>
            <person name="Shigeoka S."/>
        </authorList>
    </citation>
    <scope>NOMENCLATURE</scope>
</reference>
<reference key="6">
    <citation type="journal article" date="2008" name="Plant Physiol.">
        <title>Molecular characterization of organelle-type Nudix hydrolases in Arabidopsis.</title>
        <authorList>
            <person name="Ogawa T."/>
            <person name="Yoshimura K."/>
            <person name="Miyake H."/>
            <person name="Ishikawa K."/>
            <person name="Ito D."/>
            <person name="Tanabe N."/>
            <person name="Shigeoka S."/>
        </authorList>
    </citation>
    <scope>TISSUE SPECIFICITY</scope>
</reference>
<comment type="function">
    <text evidence="1">Probably mediates the hydrolysis of some nucleoside diphosphate derivatives.</text>
</comment>
<comment type="cofactor">
    <cofactor evidence="1">
        <name>Mg(2+)</name>
        <dbReference type="ChEBI" id="CHEBI:18420"/>
    </cofactor>
    <cofactor evidence="1">
        <name>Mn(2+)</name>
        <dbReference type="ChEBI" id="CHEBI:29035"/>
    </cofactor>
</comment>
<comment type="subcellular location">
    <subcellularLocation>
        <location evidence="5">Mitochondrion</location>
    </subcellularLocation>
</comment>
<comment type="tissue specificity">
    <text evidence="4">Expressed in roots, leaves, stems and inflorescences.</text>
</comment>
<comment type="similarity">
    <text evidence="5">Belongs to the Nudix hydrolase family.</text>
</comment>
<comment type="sequence caution" evidence="5">
    <conflict type="erroneous initiation">
        <sequence resource="EMBL-CDS" id="AAM66124"/>
    </conflict>
</comment>
<protein>
    <recommendedName>
        <fullName>Nudix hydrolase 17, mitochondrial</fullName>
        <shortName>AtNUDT17</shortName>
        <ecNumber>3.6.1.-</ecNumber>
    </recommendedName>
</protein>